<sequence length="188" mass="20868">MKYLIIGLGNIGSEYHETRHNIGFMVLDDLAQEKGVTFDLKRHAHIAEVKVKGRTLILVKPTTYMNLSGKAVQYWMQEEKIALENILVITDDLALPFGTLRMRMKGSSGGHNGLSHIEQTLASANYTRLRMGVGSDFAKGQQVDYVLAPFSAEEQKEMPDVLKRAKDAVTGFATIGVERAMNAVNTKK</sequence>
<keyword id="KW-0963">Cytoplasm</keyword>
<keyword id="KW-0378">Hydrolase</keyword>
<keyword id="KW-1185">Reference proteome</keyword>
<keyword id="KW-0694">RNA-binding</keyword>
<keyword id="KW-0820">tRNA-binding</keyword>
<organism>
    <name type="scientific">Cytophaga hutchinsonii (strain ATCC 33406 / DSM 1761 / CIP 103989 / NBRC 15051 / NCIMB 9469 / D465)</name>
    <dbReference type="NCBI Taxonomy" id="269798"/>
    <lineage>
        <taxon>Bacteria</taxon>
        <taxon>Pseudomonadati</taxon>
        <taxon>Bacteroidota</taxon>
        <taxon>Cytophagia</taxon>
        <taxon>Cytophagales</taxon>
        <taxon>Cytophagaceae</taxon>
        <taxon>Cytophaga</taxon>
    </lineage>
</organism>
<protein>
    <recommendedName>
        <fullName evidence="1">Peptidyl-tRNA hydrolase</fullName>
        <shortName evidence="1">Pth</shortName>
        <ecNumber evidence="1">3.1.1.29</ecNumber>
    </recommendedName>
</protein>
<name>PTH_CYTH3</name>
<proteinExistence type="inferred from homology"/>
<evidence type="ECO:0000255" key="1">
    <source>
        <dbReference type="HAMAP-Rule" id="MF_00083"/>
    </source>
</evidence>
<dbReference type="EC" id="3.1.1.29" evidence="1"/>
<dbReference type="EMBL" id="CP000383">
    <property type="protein sequence ID" value="ABG59877.1"/>
    <property type="molecule type" value="Genomic_DNA"/>
</dbReference>
<dbReference type="RefSeq" id="WP_011585987.1">
    <property type="nucleotide sequence ID" value="NC_008255.1"/>
</dbReference>
<dbReference type="SMR" id="Q11RT7"/>
<dbReference type="STRING" id="269798.CHU_2625"/>
<dbReference type="KEGG" id="chu:CHU_2625"/>
<dbReference type="eggNOG" id="COG0193">
    <property type="taxonomic scope" value="Bacteria"/>
</dbReference>
<dbReference type="HOGENOM" id="CLU_062456_4_1_10"/>
<dbReference type="OrthoDB" id="9800507at2"/>
<dbReference type="Proteomes" id="UP000001822">
    <property type="component" value="Chromosome"/>
</dbReference>
<dbReference type="GO" id="GO:0005737">
    <property type="term" value="C:cytoplasm"/>
    <property type="evidence" value="ECO:0007669"/>
    <property type="project" value="UniProtKB-SubCell"/>
</dbReference>
<dbReference type="GO" id="GO:0004045">
    <property type="term" value="F:peptidyl-tRNA hydrolase activity"/>
    <property type="evidence" value="ECO:0007669"/>
    <property type="project" value="UniProtKB-UniRule"/>
</dbReference>
<dbReference type="GO" id="GO:0000049">
    <property type="term" value="F:tRNA binding"/>
    <property type="evidence" value="ECO:0007669"/>
    <property type="project" value="UniProtKB-UniRule"/>
</dbReference>
<dbReference type="GO" id="GO:0006515">
    <property type="term" value="P:protein quality control for misfolded or incompletely synthesized proteins"/>
    <property type="evidence" value="ECO:0007669"/>
    <property type="project" value="UniProtKB-UniRule"/>
</dbReference>
<dbReference type="GO" id="GO:0072344">
    <property type="term" value="P:rescue of stalled ribosome"/>
    <property type="evidence" value="ECO:0007669"/>
    <property type="project" value="UniProtKB-UniRule"/>
</dbReference>
<dbReference type="CDD" id="cd00462">
    <property type="entry name" value="PTH"/>
    <property type="match status" value="1"/>
</dbReference>
<dbReference type="FunFam" id="3.40.50.1470:FF:000001">
    <property type="entry name" value="Peptidyl-tRNA hydrolase"/>
    <property type="match status" value="1"/>
</dbReference>
<dbReference type="Gene3D" id="3.40.50.1470">
    <property type="entry name" value="Peptidyl-tRNA hydrolase"/>
    <property type="match status" value="1"/>
</dbReference>
<dbReference type="HAMAP" id="MF_00083">
    <property type="entry name" value="Pept_tRNA_hydro_bact"/>
    <property type="match status" value="1"/>
</dbReference>
<dbReference type="InterPro" id="IPR001328">
    <property type="entry name" value="Pept_tRNA_hydro"/>
</dbReference>
<dbReference type="InterPro" id="IPR018171">
    <property type="entry name" value="Pept_tRNA_hydro_CS"/>
</dbReference>
<dbReference type="InterPro" id="IPR036416">
    <property type="entry name" value="Pept_tRNA_hydro_sf"/>
</dbReference>
<dbReference type="NCBIfam" id="TIGR00447">
    <property type="entry name" value="pth"/>
    <property type="match status" value="1"/>
</dbReference>
<dbReference type="PANTHER" id="PTHR17224">
    <property type="entry name" value="PEPTIDYL-TRNA HYDROLASE"/>
    <property type="match status" value="1"/>
</dbReference>
<dbReference type="PANTHER" id="PTHR17224:SF1">
    <property type="entry name" value="PEPTIDYL-TRNA HYDROLASE"/>
    <property type="match status" value="1"/>
</dbReference>
<dbReference type="Pfam" id="PF01195">
    <property type="entry name" value="Pept_tRNA_hydro"/>
    <property type="match status" value="1"/>
</dbReference>
<dbReference type="SUPFAM" id="SSF53178">
    <property type="entry name" value="Peptidyl-tRNA hydrolase-like"/>
    <property type="match status" value="1"/>
</dbReference>
<dbReference type="PROSITE" id="PS01195">
    <property type="entry name" value="PEPT_TRNA_HYDROL_1"/>
    <property type="match status" value="1"/>
</dbReference>
<reference key="1">
    <citation type="journal article" date="2007" name="Appl. Environ. Microbiol.">
        <title>Genome sequence of the cellulolytic gliding bacterium Cytophaga hutchinsonii.</title>
        <authorList>
            <person name="Xie G."/>
            <person name="Bruce D.C."/>
            <person name="Challacombe J.F."/>
            <person name="Chertkov O."/>
            <person name="Detter J.C."/>
            <person name="Gilna P."/>
            <person name="Han C.S."/>
            <person name="Lucas S."/>
            <person name="Misra M."/>
            <person name="Myers G.L."/>
            <person name="Richardson P."/>
            <person name="Tapia R."/>
            <person name="Thayer N."/>
            <person name="Thompson L.S."/>
            <person name="Brettin T.S."/>
            <person name="Henrissat B."/>
            <person name="Wilson D.B."/>
            <person name="McBride M.J."/>
        </authorList>
    </citation>
    <scope>NUCLEOTIDE SEQUENCE [LARGE SCALE GENOMIC DNA]</scope>
    <source>
        <strain>ATCC 33406 / DSM 1761 / JCM 20678 / CIP 103989 / IAM 12607 / NBRC 15051 / NCIMB 9469 / D465</strain>
    </source>
</reference>
<comment type="function">
    <text evidence="1">Hydrolyzes ribosome-free peptidyl-tRNAs (with 1 or more amino acids incorporated), which drop off the ribosome during protein synthesis, or as a result of ribosome stalling.</text>
</comment>
<comment type="function">
    <text evidence="1">Catalyzes the release of premature peptidyl moieties from peptidyl-tRNA molecules trapped in stalled 50S ribosomal subunits, and thus maintains levels of free tRNAs and 50S ribosomes.</text>
</comment>
<comment type="catalytic activity">
    <reaction evidence="1">
        <text>an N-acyl-L-alpha-aminoacyl-tRNA + H2O = an N-acyl-L-amino acid + a tRNA + H(+)</text>
        <dbReference type="Rhea" id="RHEA:54448"/>
        <dbReference type="Rhea" id="RHEA-COMP:10123"/>
        <dbReference type="Rhea" id="RHEA-COMP:13883"/>
        <dbReference type="ChEBI" id="CHEBI:15377"/>
        <dbReference type="ChEBI" id="CHEBI:15378"/>
        <dbReference type="ChEBI" id="CHEBI:59874"/>
        <dbReference type="ChEBI" id="CHEBI:78442"/>
        <dbReference type="ChEBI" id="CHEBI:138191"/>
        <dbReference type="EC" id="3.1.1.29"/>
    </reaction>
</comment>
<comment type="subunit">
    <text evidence="1">Monomer.</text>
</comment>
<comment type="subcellular location">
    <subcellularLocation>
        <location evidence="1">Cytoplasm</location>
    </subcellularLocation>
</comment>
<comment type="similarity">
    <text evidence="1">Belongs to the PTH family.</text>
</comment>
<gene>
    <name evidence="1" type="primary">pth</name>
    <name type="ordered locus">CHU_2625</name>
</gene>
<accession>Q11RT7</accession>
<feature type="chain" id="PRO_0000264027" description="Peptidyl-tRNA hydrolase">
    <location>
        <begin position="1"/>
        <end position="188"/>
    </location>
</feature>
<feature type="active site" description="Proton acceptor" evidence="1">
    <location>
        <position position="20"/>
    </location>
</feature>
<feature type="binding site" evidence="1">
    <location>
        <position position="15"/>
    </location>
    <ligand>
        <name>tRNA</name>
        <dbReference type="ChEBI" id="CHEBI:17843"/>
    </ligand>
</feature>
<feature type="binding site" evidence="1">
    <location>
        <position position="64"/>
    </location>
    <ligand>
        <name>tRNA</name>
        <dbReference type="ChEBI" id="CHEBI:17843"/>
    </ligand>
</feature>
<feature type="binding site" evidence="1">
    <location>
        <position position="66"/>
    </location>
    <ligand>
        <name>tRNA</name>
        <dbReference type="ChEBI" id="CHEBI:17843"/>
    </ligand>
</feature>
<feature type="binding site" evidence="1">
    <location>
        <position position="112"/>
    </location>
    <ligand>
        <name>tRNA</name>
        <dbReference type="ChEBI" id="CHEBI:17843"/>
    </ligand>
</feature>
<feature type="site" description="Discriminates between blocked and unblocked aminoacyl-tRNA" evidence="1">
    <location>
        <position position="10"/>
    </location>
</feature>
<feature type="site" description="Stabilizes the basic form of H active site to accept a proton" evidence="1">
    <location>
        <position position="91"/>
    </location>
</feature>